<sequence>MHWAAAVAIFFIVVTKFLQYTNKYHEKWISKFAPGNELSKKYLAKVKERHELKEFNNSISAQDNYAKWTKNNRKLDSLDKEINNLKDEIQSENKAFQAHLHKLRLLALTVPFFVFKIMYGKTPVYKLSSSTSTLFPTFVSGVWSQGWLYVLLHPLRTISQKWHIMEGKFGASKFDDMALQSVSLGIWVWALMNVINGVEFIVKQLFLTPKMEAPASVETQEEKALDAVDDAIILD</sequence>
<reference key="1">
    <citation type="journal article" date="1997" name="Nature">
        <title>The nucleotide sequence of Saccharomyces cerevisiae chromosome VII.</title>
        <authorList>
            <person name="Tettelin H."/>
            <person name="Agostoni-Carbone M.L."/>
            <person name="Albermann K."/>
            <person name="Albers M."/>
            <person name="Arroyo J."/>
            <person name="Backes U."/>
            <person name="Barreiros T."/>
            <person name="Bertani I."/>
            <person name="Bjourson A.J."/>
            <person name="Brueckner M."/>
            <person name="Bruschi C.V."/>
            <person name="Carignani G."/>
            <person name="Castagnoli L."/>
            <person name="Cerdan E."/>
            <person name="Clemente M.L."/>
            <person name="Coblenz A."/>
            <person name="Coglievina M."/>
            <person name="Coissac E."/>
            <person name="Defoor E."/>
            <person name="Del Bino S."/>
            <person name="Delius H."/>
            <person name="Delneri D."/>
            <person name="de Wergifosse P."/>
            <person name="Dujon B."/>
            <person name="Durand P."/>
            <person name="Entian K.-D."/>
            <person name="Eraso P."/>
            <person name="Escribano V."/>
            <person name="Fabiani L."/>
            <person name="Fartmann B."/>
            <person name="Feroli F."/>
            <person name="Feuermann M."/>
            <person name="Frontali L."/>
            <person name="Garcia-Gonzalez M."/>
            <person name="Garcia-Saez M.I."/>
            <person name="Goffeau A."/>
            <person name="Guerreiro P."/>
            <person name="Hani J."/>
            <person name="Hansen M."/>
            <person name="Hebling U."/>
            <person name="Hernandez K."/>
            <person name="Heumann K."/>
            <person name="Hilger F."/>
            <person name="Hofmann B."/>
            <person name="Indge K.J."/>
            <person name="James C.M."/>
            <person name="Klima R."/>
            <person name="Koetter P."/>
            <person name="Kramer B."/>
            <person name="Kramer W."/>
            <person name="Lauquin G."/>
            <person name="Leuther H."/>
            <person name="Louis E.J."/>
            <person name="Maillier E."/>
            <person name="Marconi A."/>
            <person name="Martegani E."/>
            <person name="Mazon M.J."/>
            <person name="Mazzoni C."/>
            <person name="McReynolds A.D.K."/>
            <person name="Melchioretto P."/>
            <person name="Mewes H.-W."/>
            <person name="Minenkova O."/>
            <person name="Mueller-Auer S."/>
            <person name="Nawrocki A."/>
            <person name="Netter P."/>
            <person name="Neu R."/>
            <person name="Nombela C."/>
            <person name="Oliver S.G."/>
            <person name="Panzeri L."/>
            <person name="Paoluzi S."/>
            <person name="Plevani P."/>
            <person name="Portetelle D."/>
            <person name="Portillo F."/>
            <person name="Potier S."/>
            <person name="Purnelle B."/>
            <person name="Rieger M."/>
            <person name="Riles L."/>
            <person name="Rinaldi T."/>
            <person name="Robben J."/>
            <person name="Rodrigues-Pousada C."/>
            <person name="Rodriguez-Belmonte E."/>
            <person name="Rodriguez-Torres A.M."/>
            <person name="Rose M."/>
            <person name="Ruzzi M."/>
            <person name="Saliola M."/>
            <person name="Sanchez-Perez M."/>
            <person name="Schaefer B."/>
            <person name="Schaefer M."/>
            <person name="Scharfe M."/>
            <person name="Schmidheini T."/>
            <person name="Schreer A."/>
            <person name="Skala J."/>
            <person name="Souciet J.-L."/>
            <person name="Steensma H.Y."/>
            <person name="Talla E."/>
            <person name="Thierry A."/>
            <person name="Vandenbol M."/>
            <person name="van der Aart Q.J.M."/>
            <person name="Van Dyck L."/>
            <person name="Vanoni M."/>
            <person name="Verhasselt P."/>
            <person name="Voet M."/>
            <person name="Volckaert G."/>
            <person name="Wambutt R."/>
            <person name="Watson M.D."/>
            <person name="Weber N."/>
            <person name="Wedler E."/>
            <person name="Wedler H."/>
            <person name="Wipfli P."/>
            <person name="Wolf K."/>
            <person name="Wright L.F."/>
            <person name="Zaccaria P."/>
            <person name="Zimmermann M."/>
            <person name="Zollner A."/>
            <person name="Kleine K."/>
        </authorList>
    </citation>
    <scope>NUCLEOTIDE SEQUENCE [LARGE SCALE GENOMIC DNA]</scope>
    <source>
        <strain>ATCC 204508 / S288c</strain>
    </source>
</reference>
<reference key="2">
    <citation type="journal article" date="2014" name="G3 (Bethesda)">
        <title>The reference genome sequence of Saccharomyces cerevisiae: Then and now.</title>
        <authorList>
            <person name="Engel S.R."/>
            <person name="Dietrich F.S."/>
            <person name="Fisk D.G."/>
            <person name="Binkley G."/>
            <person name="Balakrishnan R."/>
            <person name="Costanzo M.C."/>
            <person name="Dwight S.S."/>
            <person name="Hitz B.C."/>
            <person name="Karra K."/>
            <person name="Nash R.S."/>
            <person name="Weng S."/>
            <person name="Wong E.D."/>
            <person name="Lloyd P."/>
            <person name="Skrzypek M.S."/>
            <person name="Miyasato S.R."/>
            <person name="Simison M."/>
            <person name="Cherry J.M."/>
        </authorList>
    </citation>
    <scope>GENOME REANNOTATION</scope>
    <source>
        <strain>ATCC 204508 / S288c</strain>
    </source>
</reference>
<reference key="3">
    <citation type="journal article" date="2002" name="Mol. Biol. Cell">
        <title>Genetic basis of mitochondrial function and morphology in Saccharomyces cerevisiae.</title>
        <authorList>
            <person name="Dimmer K.S."/>
            <person name="Fritz S."/>
            <person name="Fuchs F."/>
            <person name="Messerschmitt M."/>
            <person name="Weinbach N."/>
            <person name="Neupert W."/>
            <person name="Westermann B."/>
        </authorList>
    </citation>
    <scope>FUNCTION</scope>
</reference>
<reference key="4">
    <citation type="journal article" date="2002" name="Nature">
        <title>Systematic identification of protein complexes in Saccharomyces cerevisiae by mass spectrometry.</title>
        <authorList>
            <person name="Ho Y."/>
            <person name="Gruhler A."/>
            <person name="Heilbut A."/>
            <person name="Bader G.D."/>
            <person name="Moore L."/>
            <person name="Adams S.-L."/>
            <person name="Millar A."/>
            <person name="Taylor P."/>
            <person name="Bennett K."/>
            <person name="Boutilier K."/>
            <person name="Yang L."/>
            <person name="Wolting C."/>
            <person name="Donaldson I."/>
            <person name="Schandorff S."/>
            <person name="Shewnarane J."/>
            <person name="Vo M."/>
            <person name="Taggart J."/>
            <person name="Goudreault M."/>
            <person name="Muskat B."/>
            <person name="Alfarano C."/>
            <person name="Dewar D."/>
            <person name="Lin Z."/>
            <person name="Michalickova K."/>
            <person name="Willems A.R."/>
            <person name="Sassi H."/>
            <person name="Nielsen P.A."/>
            <person name="Rasmussen K.J."/>
            <person name="Andersen J.R."/>
            <person name="Johansen L.E."/>
            <person name="Hansen L.H."/>
            <person name="Jespersen H."/>
            <person name="Podtelejnikov A."/>
            <person name="Nielsen E."/>
            <person name="Crawford J."/>
            <person name="Poulsen V."/>
            <person name="Soerensen B.D."/>
            <person name="Matthiesen J."/>
            <person name="Hendrickson R.C."/>
            <person name="Gleeson F."/>
            <person name="Pawson T."/>
            <person name="Moran M.F."/>
            <person name="Durocher D."/>
            <person name="Mann M."/>
            <person name="Hogue C.W.V."/>
            <person name="Figeys D."/>
            <person name="Tyers M."/>
        </authorList>
    </citation>
    <scope>IDENTIFICATION IN GET COMPLEX</scope>
    <scope>IDENTIFICATION BY MASS SPECTROMETRY</scope>
</reference>
<reference key="5">
    <citation type="journal article" date="2003" name="Nature">
        <title>Global analysis of protein localization in budding yeast.</title>
        <authorList>
            <person name="Huh W.-K."/>
            <person name="Falvo J.V."/>
            <person name="Gerke L.C."/>
            <person name="Carroll A.S."/>
            <person name="Howson R.W."/>
            <person name="Weissman J.S."/>
            <person name="O'Shea E.K."/>
        </authorList>
    </citation>
    <scope>SUBCELLULAR LOCATION [LARGE SCALE ANALYSIS]</scope>
</reference>
<reference key="6">
    <citation type="journal article" date="2003" name="Nature">
        <title>Global analysis of protein expression in yeast.</title>
        <authorList>
            <person name="Ghaemmaghami S."/>
            <person name="Huh W.-K."/>
            <person name="Bower K."/>
            <person name="Howson R.W."/>
            <person name="Belle A."/>
            <person name="Dephoure N."/>
            <person name="O'Shea E.K."/>
            <person name="Weissman J.S."/>
        </authorList>
    </citation>
    <scope>LEVEL OF PROTEIN EXPRESSION [LARGE SCALE ANALYSIS]</scope>
</reference>
<reference key="7">
    <citation type="journal article" date="2005" name="Cell">
        <title>Exploration of the function and organization of the yeast early secretory pathway through an epistatic miniarray profile.</title>
        <authorList>
            <person name="Schuldiner M."/>
            <person name="Collins S.R."/>
            <person name="Thompson N.J."/>
            <person name="Denic V."/>
            <person name="Bhamidipati A."/>
            <person name="Punna T."/>
            <person name="Ihmels J."/>
            <person name="Andrews B."/>
            <person name="Boone C."/>
            <person name="Greenblatt J.F."/>
            <person name="Weissman J.S."/>
            <person name="Krogan N.J."/>
        </authorList>
    </citation>
    <scope>FUNCTION</scope>
    <scope>IDENTIFICATION IN GET COMPLEX</scope>
    <scope>SUBCELLULAR LOCATION</scope>
    <scope>INTERACTION WITH GET3</scope>
</reference>
<reference key="8">
    <citation type="journal article" date="2005" name="Mol. Genet. Genomics">
        <title>Cooperative function of the CHD5-like protein Mdm39p with a P-type ATPase Spf1p in the maintenance of ER homeostasis in Saccharomyces cerevisiae.</title>
        <authorList>
            <person name="Ando A."/>
            <person name="Suzuki C."/>
        </authorList>
    </citation>
    <scope>SUBCELLULAR LOCATION</scope>
</reference>
<reference key="9">
    <citation type="journal article" date="2006" name="Genetics">
        <title>The conserved ATPase Get3/Arr4 modulates the activity of membrane-associated proteins in Saccharomyces cerevisiae.</title>
        <authorList>
            <person name="Auld K.L."/>
            <person name="Hitchcock A.L."/>
            <person name="Doherty H.K."/>
            <person name="Frietze S."/>
            <person name="Huang L.S."/>
            <person name="Silver P.A."/>
        </authorList>
    </citation>
    <scope>INTERACTION WITH GET3</scope>
</reference>
<reference key="10">
    <citation type="journal article" date="2006" name="J. Proteome Res.">
        <title>Toward the complete yeast mitochondrial proteome: multidimensional separation techniques for mitochondrial proteomics.</title>
        <authorList>
            <person name="Reinders J."/>
            <person name="Zahedi R.P."/>
            <person name="Pfanner N."/>
            <person name="Meisinger C."/>
            <person name="Sickmann A."/>
        </authorList>
    </citation>
    <scope>SUBCELLULAR LOCATION [LARGE SCALE ANALYSIS]</scope>
    <scope>IDENTIFICATION BY MASS SPECTROMETRY</scope>
</reference>
<reference key="11">
    <citation type="journal article" date="2008" name="Cell">
        <title>The GET complex mediates insertion of tail-anchored proteins into the ER membrane.</title>
        <authorList>
            <person name="Schuldiner M."/>
            <person name="Metz J."/>
            <person name="Schmid V."/>
            <person name="Denic V."/>
            <person name="Rakwalska M."/>
            <person name="Schmitt H.D."/>
            <person name="Schwappach B."/>
            <person name="Weissman J.S."/>
        </authorList>
    </citation>
    <scope>FUNCTION</scope>
</reference>
<reference key="12">
    <citation type="journal article" date="2014" name="PLoS ONE">
        <title>WRB and CAML are necessary and sufficient to mediate tail-anchored protein targeting to the ER membrane.</title>
        <authorList>
            <person name="Vilardi F."/>
            <person name="Stephan M."/>
            <person name="Clancy A."/>
            <person name="Janshoff A."/>
            <person name="Schwappach B."/>
        </authorList>
    </citation>
    <scope>FUNCTION</scope>
</reference>
<reference key="13">
    <citation type="journal article" date="2011" name="Mol. Cell">
        <title>The mechanism of tail-anchored protein insertion into the ER membrane.</title>
        <authorList>
            <person name="Wang F."/>
            <person name="Whynot A."/>
            <person name="Tung M."/>
            <person name="Denic V."/>
        </authorList>
    </citation>
    <scope>X-RAY CRYSTALLOGRAPHY (3.0 ANGSTROMS) OF 21-104</scope>
    <scope>FUNCTION</scope>
    <scope>SUBCELLULAR LOCATION</scope>
    <scope>SUBUNIT</scope>
    <scope>TOPOLOGY</scope>
</reference>
<reference key="14">
    <citation type="journal article" date="2011" name="Science">
        <title>Structural basis for tail-anchored membrane protein biogenesis by the Get3-receptor complex.</title>
        <authorList>
            <person name="Stefer S."/>
            <person name="Reitz S."/>
            <person name="Wang F."/>
            <person name="Wild K."/>
            <person name="Pang Y.Y."/>
            <person name="Schwarz D."/>
            <person name="Bomke J."/>
            <person name="Hein C."/>
            <person name="Lohr F."/>
            <person name="Bernhard F."/>
            <person name="Denic V."/>
            <person name="Dotsch V."/>
            <person name="Sinning I."/>
        </authorList>
    </citation>
    <scope>X-RAY CRYSTALLOGRAPHY (3.3 ANGSTROMS) OF 19-103 IN COMPLEX WITH GET2 AND GET3</scope>
    <scope>FUNCTION</scope>
    <scope>SUBUNIT</scope>
    <scope>SUBCELLULAR LOCATION</scope>
    <scope>TOPOLOGY</scope>
</reference>
<reference key="15">
    <citation type="journal article" date="2020" name="Mol. Cell">
        <title>Structural Basis of Tail-Anchored Membrane Protein Biogenesis by the GET Insertase Complex.</title>
        <authorList>
            <person name="McDowell M.A."/>
            <person name="Heimes M."/>
            <person name="Fiorentino F."/>
            <person name="Mehmood S."/>
            <person name="Farkas A."/>
            <person name="Coy-Vergara J."/>
            <person name="Wu D."/>
            <person name="Bolla J.R."/>
            <person name="Schmid V."/>
            <person name="Heinze R."/>
            <person name="Wild K."/>
            <person name="Flemming D."/>
            <person name="Pfeffer S."/>
            <person name="Schwappach B."/>
            <person name="Robinson C.V."/>
            <person name="Sinning I."/>
        </authorList>
    </citation>
    <scope>STRUCTURE BY ELECTRON MICROSCOPY (14 ANGSTROMS) OF THE GET COMPLEX</scope>
</reference>
<gene>
    <name evidence="1" type="primary">GET1</name>
    <name type="synonym">MDM39</name>
    <name type="ordered locus">YGL020C</name>
</gene>
<name>GET1_YEAST</name>
<accession>P53192</accession>
<accession>D6VUB7</accession>
<organism>
    <name type="scientific">Saccharomyces cerevisiae (strain ATCC 204508 / S288c)</name>
    <name type="common">Baker's yeast</name>
    <dbReference type="NCBI Taxonomy" id="559292"/>
    <lineage>
        <taxon>Eukaryota</taxon>
        <taxon>Fungi</taxon>
        <taxon>Dikarya</taxon>
        <taxon>Ascomycota</taxon>
        <taxon>Saccharomycotina</taxon>
        <taxon>Saccharomycetes</taxon>
        <taxon>Saccharomycetales</taxon>
        <taxon>Saccharomycetaceae</taxon>
        <taxon>Saccharomyces</taxon>
    </lineage>
</organism>
<protein>
    <recommendedName>
        <fullName evidence="1">Golgi to ER traffic protein 1</fullName>
    </recommendedName>
    <alternativeName>
        <fullName evidence="1">Guided entry of tail-anchored proteins 1</fullName>
    </alternativeName>
    <alternativeName>
        <fullName>Mitochondrial distribution and morphology protein 39</fullName>
    </alternativeName>
</protein>
<evidence type="ECO:0000255" key="1">
    <source>
        <dbReference type="HAMAP-Rule" id="MF_03113"/>
    </source>
</evidence>
<evidence type="ECO:0000269" key="2">
    <source>
    </source>
</evidence>
<evidence type="ECO:0000269" key="3">
    <source>
    </source>
</evidence>
<evidence type="ECO:0000269" key="4">
    <source>
    </source>
</evidence>
<evidence type="ECO:0000269" key="5">
    <source>
    </source>
</evidence>
<evidence type="ECO:0000269" key="6">
    <source>
    </source>
</evidence>
<evidence type="ECO:0000269" key="7">
    <source>
    </source>
</evidence>
<evidence type="ECO:0000269" key="8">
    <source>
    </source>
</evidence>
<evidence type="ECO:0000269" key="9">
    <source>
    </source>
</evidence>
<evidence type="ECO:0000269" key="10">
    <source>
    </source>
</evidence>
<evidence type="ECO:0000269" key="11">
    <source>
    </source>
</evidence>
<evidence type="ECO:0007829" key="12">
    <source>
        <dbReference type="PDB" id="3B2E"/>
    </source>
</evidence>
<evidence type="ECO:0007829" key="13">
    <source>
        <dbReference type="PDB" id="3SJB"/>
    </source>
</evidence>
<keyword id="KW-0002">3D-structure</keyword>
<keyword id="KW-0175">Coiled coil</keyword>
<keyword id="KW-0256">Endoplasmic reticulum</keyword>
<keyword id="KW-0931">ER-Golgi transport</keyword>
<keyword id="KW-0333">Golgi apparatus</keyword>
<keyword id="KW-0472">Membrane</keyword>
<keyword id="KW-0496">Mitochondrion</keyword>
<keyword id="KW-1185">Reference proteome</keyword>
<keyword id="KW-0812">Transmembrane</keyword>
<keyword id="KW-1133">Transmembrane helix</keyword>
<keyword id="KW-0813">Transport</keyword>
<feature type="chain" id="PRO_0000414847" description="Golgi to ER traffic protein 1">
    <location>
        <begin position="1"/>
        <end position="235"/>
    </location>
</feature>
<feature type="topological domain" description="Lumenal" evidence="1">
    <location>
        <position position="1"/>
    </location>
</feature>
<feature type="transmembrane region" description="Helical" evidence="1">
    <location>
        <begin position="2"/>
        <end position="21"/>
    </location>
</feature>
<feature type="topological domain" description="Cytoplasmic" evidence="1">
    <location>
        <begin position="22"/>
        <end position="104"/>
    </location>
</feature>
<feature type="transmembrane region" description="Helical" evidence="1">
    <location>
        <begin position="105"/>
        <end position="125"/>
    </location>
</feature>
<feature type="topological domain" description="Lumenal" evidence="1">
    <location>
        <begin position="126"/>
        <end position="181"/>
    </location>
</feature>
<feature type="transmembrane region" description="Helical" evidence="1">
    <location>
        <begin position="182"/>
        <end position="198"/>
    </location>
</feature>
<feature type="topological domain" description="Cytoplasmic" evidence="1">
    <location>
        <begin position="199"/>
        <end position="235"/>
    </location>
</feature>
<feature type="coiled-coil region" evidence="1">
    <location>
        <begin position="68"/>
        <end position="104"/>
    </location>
</feature>
<feature type="helix" evidence="12">
    <location>
        <begin position="40"/>
        <end position="56"/>
    </location>
</feature>
<feature type="turn" evidence="12">
    <location>
        <begin position="61"/>
        <end position="64"/>
    </location>
</feature>
<feature type="helix" evidence="12">
    <location>
        <begin position="65"/>
        <end position="78"/>
    </location>
</feature>
<feature type="turn" evidence="12">
    <location>
        <begin position="79"/>
        <end position="82"/>
    </location>
</feature>
<feature type="helix" evidence="12">
    <location>
        <begin position="85"/>
        <end position="88"/>
    </location>
</feature>
<feature type="turn" evidence="12">
    <location>
        <begin position="89"/>
        <end position="93"/>
    </location>
</feature>
<feature type="turn" evidence="12">
    <location>
        <begin position="96"/>
        <end position="98"/>
    </location>
</feature>
<feature type="helix" evidence="13">
    <location>
        <begin position="100"/>
        <end position="103"/>
    </location>
</feature>
<proteinExistence type="evidence at protein level"/>
<dbReference type="EMBL" id="Z72542">
    <property type="protein sequence ID" value="CAA96720.1"/>
    <property type="molecule type" value="Genomic_DNA"/>
</dbReference>
<dbReference type="EMBL" id="BK006941">
    <property type="protein sequence ID" value="DAA08078.1"/>
    <property type="molecule type" value="Genomic_DNA"/>
</dbReference>
<dbReference type="PIR" id="S64022">
    <property type="entry name" value="S64022"/>
</dbReference>
<dbReference type="RefSeq" id="NP_011495.1">
    <property type="nucleotide sequence ID" value="NM_001180885.1"/>
</dbReference>
<dbReference type="PDB" id="3B2E">
    <property type="method" value="X-ray"/>
    <property type="resolution" value="3.00 A"/>
    <property type="chains" value="E/F/G/H=21-104"/>
</dbReference>
<dbReference type="PDB" id="3SJA">
    <property type="method" value="X-ray"/>
    <property type="resolution" value="3.00 A"/>
    <property type="chains" value="C/D/G/H/J=36-93"/>
</dbReference>
<dbReference type="PDB" id="3SJB">
    <property type="method" value="X-ray"/>
    <property type="resolution" value="3.30 A"/>
    <property type="chains" value="C/D=19-103"/>
</dbReference>
<dbReference type="PDB" id="3SJC">
    <property type="method" value="X-ray"/>
    <property type="resolution" value="3.20 A"/>
    <property type="chains" value="C/D/G/H=36-93"/>
</dbReference>
<dbReference type="PDB" id="3VLC">
    <property type="method" value="X-ray"/>
    <property type="resolution" value="4.50 A"/>
    <property type="chains" value="E=21-104"/>
</dbReference>
<dbReference type="PDB" id="3ZS8">
    <property type="method" value="X-ray"/>
    <property type="resolution" value="3.00 A"/>
    <property type="chains" value="C/D=21-104"/>
</dbReference>
<dbReference type="PDBsum" id="3B2E"/>
<dbReference type="PDBsum" id="3SJA"/>
<dbReference type="PDBsum" id="3SJB"/>
<dbReference type="PDBsum" id="3SJC"/>
<dbReference type="PDBsum" id="3VLC"/>
<dbReference type="PDBsum" id="3ZS8"/>
<dbReference type="SMR" id="P53192"/>
<dbReference type="BioGRID" id="33226">
    <property type="interactions" value="790"/>
</dbReference>
<dbReference type="ComplexPortal" id="CPX-956">
    <property type="entry name" value="GET complex"/>
</dbReference>
<dbReference type="DIP" id="DIP-6309N"/>
<dbReference type="FunCoup" id="P53192">
    <property type="interactions" value="53"/>
</dbReference>
<dbReference type="IntAct" id="P53192">
    <property type="interactions" value="6"/>
</dbReference>
<dbReference type="MINT" id="P53192"/>
<dbReference type="STRING" id="4932.YGL020C"/>
<dbReference type="TCDB" id="3.A.21.1.1">
    <property type="family name" value="the c-terminal tail-anchored membrane protein biogenesis/ insertion complex (tamp-b) family"/>
</dbReference>
<dbReference type="PaxDb" id="4932-YGL020C"/>
<dbReference type="PeptideAtlas" id="P53192"/>
<dbReference type="EnsemblFungi" id="YGL020C_mRNA">
    <property type="protein sequence ID" value="YGL020C"/>
    <property type="gene ID" value="YGL020C"/>
</dbReference>
<dbReference type="GeneID" id="852864"/>
<dbReference type="KEGG" id="sce:YGL020C"/>
<dbReference type="AGR" id="SGD:S000002988"/>
<dbReference type="SGD" id="S000002988">
    <property type="gene designation" value="GET1"/>
</dbReference>
<dbReference type="VEuPathDB" id="FungiDB:YGL020C"/>
<dbReference type="eggNOG" id="KOG4253">
    <property type="taxonomic scope" value="Eukaryota"/>
</dbReference>
<dbReference type="HOGENOM" id="CLU_089418_2_1_1"/>
<dbReference type="InParanoid" id="P53192"/>
<dbReference type="OMA" id="AQDNYAR"/>
<dbReference type="OrthoDB" id="69461at2759"/>
<dbReference type="BioCyc" id="YEAST:G3O-30540-MONOMER"/>
<dbReference type="BioGRID-ORCS" id="852864">
    <property type="hits" value="1 hit in 10 CRISPR screens"/>
</dbReference>
<dbReference type="EvolutionaryTrace" id="P53192"/>
<dbReference type="PRO" id="PR:P53192"/>
<dbReference type="Proteomes" id="UP000002311">
    <property type="component" value="Chromosome VII"/>
</dbReference>
<dbReference type="RNAct" id="P53192">
    <property type="molecule type" value="protein"/>
</dbReference>
<dbReference type="GO" id="GO:0005783">
    <property type="term" value="C:endoplasmic reticulum"/>
    <property type="evidence" value="ECO:0007005"/>
    <property type="project" value="SGD"/>
</dbReference>
<dbReference type="GO" id="GO:0005789">
    <property type="term" value="C:endoplasmic reticulum membrane"/>
    <property type="evidence" value="ECO:0000314"/>
    <property type="project" value="SGD"/>
</dbReference>
<dbReference type="GO" id="GO:0043529">
    <property type="term" value="C:GET complex"/>
    <property type="evidence" value="ECO:0000314"/>
    <property type="project" value="UniProtKB"/>
</dbReference>
<dbReference type="GO" id="GO:0000139">
    <property type="term" value="C:Golgi membrane"/>
    <property type="evidence" value="ECO:0007669"/>
    <property type="project" value="UniProtKB-SubCell"/>
</dbReference>
<dbReference type="GO" id="GO:0031966">
    <property type="term" value="C:mitochondrial membrane"/>
    <property type="evidence" value="ECO:0007669"/>
    <property type="project" value="UniProtKB-SubCell"/>
</dbReference>
<dbReference type="GO" id="GO:0005739">
    <property type="term" value="C:mitochondrion"/>
    <property type="evidence" value="ECO:0007005"/>
    <property type="project" value="SGD"/>
</dbReference>
<dbReference type="GO" id="GO:0008320">
    <property type="term" value="F:protein transmembrane transporter activity"/>
    <property type="evidence" value="ECO:0000314"/>
    <property type="project" value="SGD"/>
</dbReference>
<dbReference type="GO" id="GO:0043495">
    <property type="term" value="F:protein-membrane adaptor activity"/>
    <property type="evidence" value="ECO:0000316"/>
    <property type="project" value="SGD"/>
</dbReference>
<dbReference type="GO" id="GO:0097051">
    <property type="term" value="P:establishment of protein localization to endoplasmic reticulum membrane"/>
    <property type="evidence" value="ECO:0000314"/>
    <property type="project" value="SGD"/>
</dbReference>
<dbReference type="GO" id="GO:0000423">
    <property type="term" value="P:mitophagy"/>
    <property type="evidence" value="ECO:0000315"/>
    <property type="project" value="SGD"/>
</dbReference>
<dbReference type="GO" id="GO:0045048">
    <property type="term" value="P:protein insertion into ER membrane"/>
    <property type="evidence" value="ECO:0000314"/>
    <property type="project" value="ComplexPortal"/>
</dbReference>
<dbReference type="GO" id="GO:0006890">
    <property type="term" value="P:retrograde vesicle-mediated transport, Golgi to endoplasmic reticulum"/>
    <property type="evidence" value="ECO:0000314"/>
    <property type="project" value="SGD"/>
</dbReference>
<dbReference type="GO" id="GO:0071816">
    <property type="term" value="P:tail-anchored membrane protein insertion into ER membrane"/>
    <property type="evidence" value="ECO:0000316"/>
    <property type="project" value="SGD"/>
</dbReference>
<dbReference type="Gene3D" id="1.10.287.660">
    <property type="entry name" value="Helix hairpin bin"/>
    <property type="match status" value="1"/>
</dbReference>
<dbReference type="HAMAP" id="MF_03113">
    <property type="entry name" value="Get1"/>
    <property type="match status" value="1"/>
</dbReference>
<dbReference type="InterPro" id="IPR028945">
    <property type="entry name" value="Get1"/>
</dbReference>
<dbReference type="InterPro" id="IPR027538">
    <property type="entry name" value="Get1_fungi"/>
</dbReference>
<dbReference type="InterPro" id="IPR029012">
    <property type="entry name" value="Helix_hairpin_bin_sf"/>
</dbReference>
<dbReference type="PANTHER" id="PTHR42650:SF1">
    <property type="entry name" value="GUIDED ENTRY OF TAIL-ANCHORED PROTEINS FACTOR 1"/>
    <property type="match status" value="1"/>
</dbReference>
<dbReference type="PANTHER" id="PTHR42650">
    <property type="entry name" value="TAIL-ANCHORED PROTEIN INSERTION RECEPTOR WRB"/>
    <property type="match status" value="1"/>
</dbReference>
<dbReference type="Pfam" id="PF04420">
    <property type="entry name" value="CHD5"/>
    <property type="match status" value="1"/>
</dbReference>
<comment type="function">
    <text evidence="1 3 5 7 8 9 10">Required for the post-translational delivery of tail-anchored (TA) proteins to the endoplasmic reticulum. Together with GET2, acts as a membrane receptor for soluble GET3, which recognizes and selectively binds the transmembrane domain of TA proteins in the cytosol. The GET complex cooperates with the HDEL receptor ERD2 to mediate the ATP-dependent retrieval of resident ER proteins that contain a C-terminal H-D-E-L retention signal from the Golgi to the ER. Involved in mitochondrial distribution and morphology.</text>
</comment>
<comment type="subunit">
    <text evidence="1 2 5 8 9 11">Component of the Golgi to ER traffic (GET) complex, which is composed of GET1, GET2 and GET3. Within the complex, GET1 and GET2 form a heterotetramer which is stabilized by phosphatidylinositol binding and which binds to the GET3 homodimer (PubMed:32910895).</text>
</comment>
<comment type="interaction">
    <interactant intactId="EBI-23722">
        <id>P53192</id>
    </interactant>
    <interactant intactId="EBI-22604">
        <id>P40056</id>
        <label>GET2</label>
    </interactant>
    <organismsDiffer>false</organismsDiffer>
    <experiments>4</experiments>
</comment>
<comment type="interaction">
    <interactant intactId="EBI-23722">
        <id>P53192</id>
    </interactant>
    <interactant intactId="EBI-2989">
        <id>Q12154</id>
        <label>GET3</label>
    </interactant>
    <organismsDiffer>false</organismsDiffer>
    <experiments>13</experiments>
</comment>
<comment type="subcellular location">
    <subcellularLocation>
        <location>Endoplasmic reticulum membrane</location>
        <topology>Multi-pass membrane protein</topology>
    </subcellularLocation>
    <subcellularLocation>
        <location>Golgi apparatus membrane</location>
        <topology>Multi-pass membrane protein</topology>
    </subcellularLocation>
    <subcellularLocation>
        <location evidence="6">Mitochondrion membrane</location>
        <topology evidence="6">Multi-pass membrane protein</topology>
    </subcellularLocation>
</comment>
<comment type="miscellaneous">
    <text evidence="4">Present with 2250 molecules/cell in log phase SD medium.</text>
</comment>
<comment type="similarity">
    <text evidence="1">Belongs to the WRB/GET1 family.</text>
</comment>